<accession>Q7VSY1</accession>
<proteinExistence type="inferred from homology"/>
<feature type="chain" id="PRO_0000301145" description="Sec-independent protein translocase protein TatB">
    <location>
        <begin position="1"/>
        <end position="147"/>
    </location>
</feature>
<feature type="transmembrane region" description="Helical" evidence="1">
    <location>
        <begin position="1"/>
        <end position="21"/>
    </location>
</feature>
<feature type="region of interest" description="Disordered" evidence="2">
    <location>
        <begin position="67"/>
        <end position="147"/>
    </location>
</feature>
<feature type="compositionally biased region" description="Basic and acidic residues" evidence="2">
    <location>
        <begin position="93"/>
        <end position="103"/>
    </location>
</feature>
<feature type="compositionally biased region" description="Low complexity" evidence="2">
    <location>
        <begin position="109"/>
        <end position="120"/>
    </location>
</feature>
<feature type="compositionally biased region" description="Low complexity" evidence="2">
    <location>
        <begin position="129"/>
        <end position="147"/>
    </location>
</feature>
<dbReference type="EMBL" id="BX640422">
    <property type="protein sequence ID" value="CAE44034.1"/>
    <property type="molecule type" value="Genomic_DNA"/>
</dbReference>
<dbReference type="RefSeq" id="NP_882279.1">
    <property type="nucleotide sequence ID" value="NC_002929.2"/>
</dbReference>
<dbReference type="RefSeq" id="WP_010931646.1">
    <property type="nucleotide sequence ID" value="NZ_CP039022.1"/>
</dbReference>
<dbReference type="SMR" id="Q7VSY1"/>
<dbReference type="STRING" id="257313.BP3778"/>
<dbReference type="PaxDb" id="257313-BP3778"/>
<dbReference type="GeneID" id="69599995"/>
<dbReference type="KEGG" id="bpe:BP3778"/>
<dbReference type="PATRIC" id="fig|257313.5.peg.4082"/>
<dbReference type="eggNOG" id="COG1826">
    <property type="taxonomic scope" value="Bacteria"/>
</dbReference>
<dbReference type="HOGENOM" id="CLU_086034_1_3_4"/>
<dbReference type="Proteomes" id="UP000002676">
    <property type="component" value="Chromosome"/>
</dbReference>
<dbReference type="GO" id="GO:0033281">
    <property type="term" value="C:TAT protein transport complex"/>
    <property type="evidence" value="ECO:0007669"/>
    <property type="project" value="UniProtKB-UniRule"/>
</dbReference>
<dbReference type="GO" id="GO:0008320">
    <property type="term" value="F:protein transmembrane transporter activity"/>
    <property type="evidence" value="ECO:0007669"/>
    <property type="project" value="UniProtKB-UniRule"/>
</dbReference>
<dbReference type="GO" id="GO:0043953">
    <property type="term" value="P:protein transport by the Tat complex"/>
    <property type="evidence" value="ECO:0007669"/>
    <property type="project" value="UniProtKB-UniRule"/>
</dbReference>
<dbReference type="Gene3D" id="1.20.5.3310">
    <property type="match status" value="1"/>
</dbReference>
<dbReference type="HAMAP" id="MF_00237">
    <property type="entry name" value="TatB"/>
    <property type="match status" value="1"/>
</dbReference>
<dbReference type="InterPro" id="IPR003369">
    <property type="entry name" value="TatA/B/E"/>
</dbReference>
<dbReference type="InterPro" id="IPR018448">
    <property type="entry name" value="TatB"/>
</dbReference>
<dbReference type="NCBIfam" id="TIGR01410">
    <property type="entry name" value="tatB"/>
    <property type="match status" value="1"/>
</dbReference>
<dbReference type="PANTHER" id="PTHR33162">
    <property type="entry name" value="SEC-INDEPENDENT PROTEIN TRANSLOCASE PROTEIN TATA, CHLOROPLASTIC"/>
    <property type="match status" value="1"/>
</dbReference>
<dbReference type="PANTHER" id="PTHR33162:SF1">
    <property type="entry name" value="SEC-INDEPENDENT PROTEIN TRANSLOCASE PROTEIN TATA, CHLOROPLASTIC"/>
    <property type="match status" value="1"/>
</dbReference>
<dbReference type="Pfam" id="PF02416">
    <property type="entry name" value="TatA_B_E"/>
    <property type="match status" value="1"/>
</dbReference>
<dbReference type="PRINTS" id="PR01506">
    <property type="entry name" value="TATBPROTEIN"/>
</dbReference>
<sequence length="147" mass="15876">MFDVSFTELMVIGVIALVVIGPERLPKVARTIGHLLGRAQRYVNDVKSDIRREIELDELRKFKNEMDETARSMQTSLRETEDTLRDSTQALRAELDDTARDASKAVNGADAPAEPAPAVASDTDTRSIAPPAAATPADKTPPTGSAT</sequence>
<reference key="1">
    <citation type="journal article" date="2003" name="Nat. Genet.">
        <title>Comparative analysis of the genome sequences of Bordetella pertussis, Bordetella parapertussis and Bordetella bronchiseptica.</title>
        <authorList>
            <person name="Parkhill J."/>
            <person name="Sebaihia M."/>
            <person name="Preston A."/>
            <person name="Murphy L.D."/>
            <person name="Thomson N.R."/>
            <person name="Harris D.E."/>
            <person name="Holden M.T.G."/>
            <person name="Churcher C.M."/>
            <person name="Bentley S.D."/>
            <person name="Mungall K.L."/>
            <person name="Cerdeno-Tarraga A.-M."/>
            <person name="Temple L."/>
            <person name="James K.D."/>
            <person name="Harris B."/>
            <person name="Quail M.A."/>
            <person name="Achtman M."/>
            <person name="Atkin R."/>
            <person name="Baker S."/>
            <person name="Basham D."/>
            <person name="Bason N."/>
            <person name="Cherevach I."/>
            <person name="Chillingworth T."/>
            <person name="Collins M."/>
            <person name="Cronin A."/>
            <person name="Davis P."/>
            <person name="Doggett J."/>
            <person name="Feltwell T."/>
            <person name="Goble A."/>
            <person name="Hamlin N."/>
            <person name="Hauser H."/>
            <person name="Holroyd S."/>
            <person name="Jagels K."/>
            <person name="Leather S."/>
            <person name="Moule S."/>
            <person name="Norberczak H."/>
            <person name="O'Neil S."/>
            <person name="Ormond D."/>
            <person name="Price C."/>
            <person name="Rabbinowitsch E."/>
            <person name="Rutter S."/>
            <person name="Sanders M."/>
            <person name="Saunders D."/>
            <person name="Seeger K."/>
            <person name="Sharp S."/>
            <person name="Simmonds M."/>
            <person name="Skelton J."/>
            <person name="Squares R."/>
            <person name="Squares S."/>
            <person name="Stevens K."/>
            <person name="Unwin L."/>
            <person name="Whitehead S."/>
            <person name="Barrell B.G."/>
            <person name="Maskell D.J."/>
        </authorList>
    </citation>
    <scope>NUCLEOTIDE SEQUENCE [LARGE SCALE GENOMIC DNA]</scope>
    <source>
        <strain>Tohama I / ATCC BAA-589 / NCTC 13251</strain>
    </source>
</reference>
<keyword id="KW-0997">Cell inner membrane</keyword>
<keyword id="KW-1003">Cell membrane</keyword>
<keyword id="KW-0472">Membrane</keyword>
<keyword id="KW-0653">Protein transport</keyword>
<keyword id="KW-1185">Reference proteome</keyword>
<keyword id="KW-0811">Translocation</keyword>
<keyword id="KW-0812">Transmembrane</keyword>
<keyword id="KW-1133">Transmembrane helix</keyword>
<keyword id="KW-0813">Transport</keyword>
<comment type="function">
    <text evidence="1">Part of the twin-arginine translocation (Tat) system that transports large folded proteins containing a characteristic twin-arginine motif in their signal peptide across membranes. Together with TatC, TatB is part of a receptor directly interacting with Tat signal peptides. TatB may form an oligomeric binding site that transiently accommodates folded Tat precursor proteins before their translocation.</text>
</comment>
<comment type="subunit">
    <text evidence="1">The Tat system comprises two distinct complexes: a TatABC complex, containing multiple copies of TatA, TatB and TatC subunits, and a separate TatA complex, containing only TatA subunits. Substrates initially bind to the TatABC complex, which probably triggers association of the separate TatA complex to form the active translocon.</text>
</comment>
<comment type="subcellular location">
    <subcellularLocation>
        <location evidence="1">Cell inner membrane</location>
        <topology evidence="1">Single-pass membrane protein</topology>
    </subcellularLocation>
</comment>
<comment type="similarity">
    <text evidence="1">Belongs to the TatB family.</text>
</comment>
<organism>
    <name type="scientific">Bordetella pertussis (strain Tohama I / ATCC BAA-589 / NCTC 13251)</name>
    <dbReference type="NCBI Taxonomy" id="257313"/>
    <lineage>
        <taxon>Bacteria</taxon>
        <taxon>Pseudomonadati</taxon>
        <taxon>Pseudomonadota</taxon>
        <taxon>Betaproteobacteria</taxon>
        <taxon>Burkholderiales</taxon>
        <taxon>Alcaligenaceae</taxon>
        <taxon>Bordetella</taxon>
    </lineage>
</organism>
<evidence type="ECO:0000255" key="1">
    <source>
        <dbReference type="HAMAP-Rule" id="MF_00237"/>
    </source>
</evidence>
<evidence type="ECO:0000256" key="2">
    <source>
        <dbReference type="SAM" id="MobiDB-lite"/>
    </source>
</evidence>
<name>TATB_BORPE</name>
<gene>
    <name evidence="1" type="primary">tatB</name>
    <name type="ordered locus">BP3778</name>
</gene>
<protein>
    <recommendedName>
        <fullName evidence="1">Sec-independent protein translocase protein TatB</fullName>
    </recommendedName>
</protein>